<feature type="chain" id="PRO_1000134202" description="ATP synthase gamma chain">
    <location>
        <begin position="1"/>
        <end position="287"/>
    </location>
</feature>
<evidence type="ECO:0000255" key="1">
    <source>
        <dbReference type="HAMAP-Rule" id="MF_00815"/>
    </source>
</evidence>
<proteinExistence type="inferred from homology"/>
<dbReference type="EMBL" id="CP001120">
    <property type="protein sequence ID" value="ACF68406.1"/>
    <property type="molecule type" value="Genomic_DNA"/>
</dbReference>
<dbReference type="RefSeq" id="WP_000896506.1">
    <property type="nucleotide sequence ID" value="NC_011083.1"/>
</dbReference>
<dbReference type="SMR" id="B4TAX3"/>
<dbReference type="GeneID" id="66758155"/>
<dbReference type="KEGG" id="seh:SeHA_C4197"/>
<dbReference type="HOGENOM" id="CLU_050669_0_1_6"/>
<dbReference type="Proteomes" id="UP000001866">
    <property type="component" value="Chromosome"/>
</dbReference>
<dbReference type="GO" id="GO:0005886">
    <property type="term" value="C:plasma membrane"/>
    <property type="evidence" value="ECO:0007669"/>
    <property type="project" value="UniProtKB-SubCell"/>
</dbReference>
<dbReference type="GO" id="GO:0045259">
    <property type="term" value="C:proton-transporting ATP synthase complex"/>
    <property type="evidence" value="ECO:0007669"/>
    <property type="project" value="UniProtKB-KW"/>
</dbReference>
<dbReference type="GO" id="GO:0005524">
    <property type="term" value="F:ATP binding"/>
    <property type="evidence" value="ECO:0007669"/>
    <property type="project" value="UniProtKB-UniRule"/>
</dbReference>
<dbReference type="GO" id="GO:0046933">
    <property type="term" value="F:proton-transporting ATP synthase activity, rotational mechanism"/>
    <property type="evidence" value="ECO:0007669"/>
    <property type="project" value="UniProtKB-UniRule"/>
</dbReference>
<dbReference type="GO" id="GO:0042777">
    <property type="term" value="P:proton motive force-driven plasma membrane ATP synthesis"/>
    <property type="evidence" value="ECO:0007669"/>
    <property type="project" value="UniProtKB-UniRule"/>
</dbReference>
<dbReference type="CDD" id="cd12151">
    <property type="entry name" value="F1-ATPase_gamma"/>
    <property type="match status" value="1"/>
</dbReference>
<dbReference type="FunFam" id="1.10.287.80:FF:000005">
    <property type="entry name" value="ATP synthase gamma chain"/>
    <property type="match status" value="2"/>
</dbReference>
<dbReference type="FunFam" id="3.40.1380.10:FF:000001">
    <property type="entry name" value="ATP synthase gamma chain"/>
    <property type="match status" value="1"/>
</dbReference>
<dbReference type="Gene3D" id="3.40.1380.10">
    <property type="match status" value="1"/>
</dbReference>
<dbReference type="Gene3D" id="1.10.287.80">
    <property type="entry name" value="ATP synthase, gamma subunit, helix hairpin domain"/>
    <property type="match status" value="1"/>
</dbReference>
<dbReference type="HAMAP" id="MF_00815">
    <property type="entry name" value="ATP_synth_gamma_bact"/>
    <property type="match status" value="1"/>
</dbReference>
<dbReference type="InterPro" id="IPR035968">
    <property type="entry name" value="ATP_synth_F1_ATPase_gsu"/>
</dbReference>
<dbReference type="InterPro" id="IPR000131">
    <property type="entry name" value="ATP_synth_F1_gsu"/>
</dbReference>
<dbReference type="InterPro" id="IPR023632">
    <property type="entry name" value="ATP_synth_F1_gsu_CS"/>
</dbReference>
<dbReference type="NCBIfam" id="TIGR01146">
    <property type="entry name" value="ATPsyn_F1gamma"/>
    <property type="match status" value="1"/>
</dbReference>
<dbReference type="NCBIfam" id="NF004144">
    <property type="entry name" value="PRK05621.1-1"/>
    <property type="match status" value="1"/>
</dbReference>
<dbReference type="PANTHER" id="PTHR11693">
    <property type="entry name" value="ATP SYNTHASE GAMMA CHAIN"/>
    <property type="match status" value="1"/>
</dbReference>
<dbReference type="PANTHER" id="PTHR11693:SF22">
    <property type="entry name" value="ATP SYNTHASE SUBUNIT GAMMA, MITOCHONDRIAL"/>
    <property type="match status" value="1"/>
</dbReference>
<dbReference type="Pfam" id="PF00231">
    <property type="entry name" value="ATP-synt"/>
    <property type="match status" value="1"/>
</dbReference>
<dbReference type="PRINTS" id="PR00126">
    <property type="entry name" value="ATPASEGAMMA"/>
</dbReference>
<dbReference type="SUPFAM" id="SSF52943">
    <property type="entry name" value="ATP synthase (F1-ATPase), gamma subunit"/>
    <property type="match status" value="1"/>
</dbReference>
<dbReference type="PROSITE" id="PS00153">
    <property type="entry name" value="ATPASE_GAMMA"/>
    <property type="match status" value="1"/>
</dbReference>
<reference key="1">
    <citation type="journal article" date="2011" name="J. Bacteriol.">
        <title>Comparative genomics of 28 Salmonella enterica isolates: evidence for CRISPR-mediated adaptive sublineage evolution.</title>
        <authorList>
            <person name="Fricke W.F."/>
            <person name="Mammel M.K."/>
            <person name="McDermott P.F."/>
            <person name="Tartera C."/>
            <person name="White D.G."/>
            <person name="Leclerc J.E."/>
            <person name="Ravel J."/>
            <person name="Cebula T.A."/>
        </authorList>
    </citation>
    <scope>NUCLEOTIDE SEQUENCE [LARGE SCALE GENOMIC DNA]</scope>
    <source>
        <strain>SL476</strain>
    </source>
</reference>
<accession>B4TAX3</accession>
<gene>
    <name evidence="1" type="primary">atpG</name>
    <name type="ordered locus">SeHA_C4197</name>
</gene>
<organism>
    <name type="scientific">Salmonella heidelberg (strain SL476)</name>
    <dbReference type="NCBI Taxonomy" id="454169"/>
    <lineage>
        <taxon>Bacteria</taxon>
        <taxon>Pseudomonadati</taxon>
        <taxon>Pseudomonadota</taxon>
        <taxon>Gammaproteobacteria</taxon>
        <taxon>Enterobacterales</taxon>
        <taxon>Enterobacteriaceae</taxon>
        <taxon>Salmonella</taxon>
    </lineage>
</organism>
<sequence>MAGAKEIRSKIASVQNTQKITKAMEMVAASKMRKSQDRMAASRPYAETMRKVIGHLANGNLEYKHPYLEERDVKRVGYLVVSTDRGLCGGLNINLFKKLLADMKAWSDKGVQCELAMIGSKGVSFFNSVGGNVVAQVTGMGDNPSLSELIGPVKVMLQAYDEGRLDKLYIVSNKFINTMSQVPTITQLLPLPASEDDDLKRKAWDYLYEPDPKALLDTLLRRYVESQVYQGVVENLASEQAARMVAMKAATDNGGSLIKELQLVYNKARQASITQELTEIVSGAAAV</sequence>
<keyword id="KW-0066">ATP synthesis</keyword>
<keyword id="KW-0997">Cell inner membrane</keyword>
<keyword id="KW-1003">Cell membrane</keyword>
<keyword id="KW-0139">CF(1)</keyword>
<keyword id="KW-0375">Hydrogen ion transport</keyword>
<keyword id="KW-0406">Ion transport</keyword>
<keyword id="KW-0472">Membrane</keyword>
<keyword id="KW-0813">Transport</keyword>
<comment type="function">
    <text evidence="1">Produces ATP from ADP in the presence of a proton gradient across the membrane. The gamma chain is believed to be important in regulating ATPase activity and the flow of protons through the CF(0) complex.</text>
</comment>
<comment type="subunit">
    <text evidence="1">F-type ATPases have 2 components, CF(1) - the catalytic core - and CF(0) - the membrane proton channel. CF(1) has five subunits: alpha(3), beta(3), gamma(1), delta(1), epsilon(1). CF(0) has three main subunits: a, b and c.</text>
</comment>
<comment type="subcellular location">
    <subcellularLocation>
        <location evidence="1">Cell inner membrane</location>
        <topology evidence="1">Peripheral membrane protein</topology>
    </subcellularLocation>
</comment>
<comment type="similarity">
    <text evidence="1">Belongs to the ATPase gamma chain family.</text>
</comment>
<protein>
    <recommendedName>
        <fullName evidence="1">ATP synthase gamma chain</fullName>
    </recommendedName>
    <alternativeName>
        <fullName evidence="1">ATP synthase F1 sector gamma subunit</fullName>
    </alternativeName>
    <alternativeName>
        <fullName evidence="1">F-ATPase gamma subunit</fullName>
    </alternativeName>
</protein>
<name>ATPG_SALHS</name>